<protein>
    <recommendedName>
        <fullName>Purine nucleoside phosphorylase</fullName>
        <shortName>PNP</shortName>
        <ecNumber>2.4.2.1</ecNumber>
    </recommendedName>
    <alternativeName>
        <fullName>Inosine phosphorylase</fullName>
    </alternativeName>
    <alternativeName>
        <fullName>Inosine-guanosine phosphorylase</fullName>
    </alternativeName>
</protein>
<evidence type="ECO:0000250" key="1"/>
<evidence type="ECO:0000250" key="2">
    <source>
        <dbReference type="UniProtKB" id="P55859"/>
    </source>
</evidence>
<evidence type="ECO:0000269" key="3">
    <source>
    </source>
</evidence>
<evidence type="ECO:0000305" key="4"/>
<evidence type="ECO:0007744" key="5">
    <source>
    </source>
</evidence>
<evidence type="ECO:0007744" key="6">
    <source>
    </source>
</evidence>
<reference key="1">
    <citation type="journal article" date="1997" name="Nature">
        <title>The nucleotide sequence of Saccharomyces cerevisiae chromosome XII.</title>
        <authorList>
            <person name="Johnston M."/>
            <person name="Hillier L.W."/>
            <person name="Riles L."/>
            <person name="Albermann K."/>
            <person name="Andre B."/>
            <person name="Ansorge W."/>
            <person name="Benes V."/>
            <person name="Brueckner M."/>
            <person name="Delius H."/>
            <person name="Dubois E."/>
            <person name="Duesterhoeft A."/>
            <person name="Entian K.-D."/>
            <person name="Floeth M."/>
            <person name="Goffeau A."/>
            <person name="Hebling U."/>
            <person name="Heumann K."/>
            <person name="Heuss-Neitzel D."/>
            <person name="Hilbert H."/>
            <person name="Hilger F."/>
            <person name="Kleine K."/>
            <person name="Koetter P."/>
            <person name="Louis E.J."/>
            <person name="Messenguy F."/>
            <person name="Mewes H.-W."/>
            <person name="Miosga T."/>
            <person name="Moestl D."/>
            <person name="Mueller-Auer S."/>
            <person name="Nentwich U."/>
            <person name="Obermaier B."/>
            <person name="Piravandi E."/>
            <person name="Pohl T.M."/>
            <person name="Portetelle D."/>
            <person name="Purnelle B."/>
            <person name="Rechmann S."/>
            <person name="Rieger M."/>
            <person name="Rinke M."/>
            <person name="Rose M."/>
            <person name="Scharfe M."/>
            <person name="Scherens B."/>
            <person name="Scholler P."/>
            <person name="Schwager C."/>
            <person name="Schwarz S."/>
            <person name="Underwood A.P."/>
            <person name="Urrestarazu L.A."/>
            <person name="Vandenbol M."/>
            <person name="Verhasselt P."/>
            <person name="Vierendeels F."/>
            <person name="Voet M."/>
            <person name="Volckaert G."/>
            <person name="Voss H."/>
            <person name="Wambutt R."/>
            <person name="Wedler E."/>
            <person name="Wedler H."/>
            <person name="Zimmermann F.K."/>
            <person name="Zollner A."/>
            <person name="Hani J."/>
            <person name="Hoheisel J.D."/>
        </authorList>
    </citation>
    <scope>NUCLEOTIDE SEQUENCE [LARGE SCALE GENOMIC DNA]</scope>
    <source>
        <strain>ATCC 204508 / S288c</strain>
    </source>
</reference>
<reference key="2">
    <citation type="journal article" date="2014" name="G3 (Bethesda)">
        <title>The reference genome sequence of Saccharomyces cerevisiae: Then and now.</title>
        <authorList>
            <person name="Engel S.R."/>
            <person name="Dietrich F.S."/>
            <person name="Fisk D.G."/>
            <person name="Binkley G."/>
            <person name="Balakrishnan R."/>
            <person name="Costanzo M.C."/>
            <person name="Dwight S.S."/>
            <person name="Hitz B.C."/>
            <person name="Karra K."/>
            <person name="Nash R.S."/>
            <person name="Weng S."/>
            <person name="Wong E.D."/>
            <person name="Lloyd P."/>
            <person name="Skrzypek M.S."/>
            <person name="Miyasato S.R."/>
            <person name="Simison M."/>
            <person name="Cherry J.M."/>
        </authorList>
    </citation>
    <scope>GENOME REANNOTATION</scope>
    <source>
        <strain>ATCC 204508 / S288c</strain>
    </source>
</reference>
<reference key="3">
    <citation type="journal article" date="2007" name="Genome Res.">
        <title>Approaching a complete repository of sequence-verified protein-encoding clones for Saccharomyces cerevisiae.</title>
        <authorList>
            <person name="Hu Y."/>
            <person name="Rolfs A."/>
            <person name="Bhullar B."/>
            <person name="Murthy T.V.S."/>
            <person name="Zhu C."/>
            <person name="Berger M.F."/>
            <person name="Camargo A.A."/>
            <person name="Kelley F."/>
            <person name="McCarron S."/>
            <person name="Jepson D."/>
            <person name="Richardson A."/>
            <person name="Raphael J."/>
            <person name="Moreira D."/>
            <person name="Taycher E."/>
            <person name="Zuo D."/>
            <person name="Mohr S."/>
            <person name="Kane M.F."/>
            <person name="Williamson J."/>
            <person name="Simpson A.J.G."/>
            <person name="Bulyk M.L."/>
            <person name="Harlow E."/>
            <person name="Marsischky G."/>
            <person name="Kolodner R.D."/>
            <person name="LaBaer J."/>
        </authorList>
    </citation>
    <scope>NUCLEOTIDE SEQUENCE [GENOMIC DNA]</scope>
    <source>
        <strain>ATCC 204508 / S288c</strain>
    </source>
</reference>
<reference key="4">
    <citation type="journal article" date="2003" name="Nature">
        <title>Global analysis of protein expression in yeast.</title>
        <authorList>
            <person name="Ghaemmaghami S."/>
            <person name="Huh W.-K."/>
            <person name="Bower K."/>
            <person name="Howson R.W."/>
            <person name="Belle A."/>
            <person name="Dephoure N."/>
            <person name="O'Shea E.K."/>
            <person name="Weissman J.S."/>
        </authorList>
    </citation>
    <scope>LEVEL OF PROTEIN EXPRESSION [LARGE SCALE ANALYSIS]</scope>
</reference>
<reference key="5">
    <citation type="journal article" date="2008" name="Mol. Cell. Proteomics">
        <title>A multidimensional chromatography technology for in-depth phosphoproteome analysis.</title>
        <authorList>
            <person name="Albuquerque C.P."/>
            <person name="Smolka M.B."/>
            <person name="Payne S.H."/>
            <person name="Bafna V."/>
            <person name="Eng J."/>
            <person name="Zhou H."/>
        </authorList>
    </citation>
    <scope>PHOSPHORYLATION [LARGE SCALE ANALYSIS] AT SER-275</scope>
    <scope>IDENTIFICATION BY MASS SPECTROMETRY [LARGE SCALE ANALYSIS]</scope>
</reference>
<reference key="6">
    <citation type="journal article" date="2012" name="Proc. Natl. Acad. Sci. U.S.A.">
        <title>N-terminal acetylome analyses and functional insights of the N-terminal acetyltransferase NatB.</title>
        <authorList>
            <person name="Van Damme P."/>
            <person name="Lasa M."/>
            <person name="Polevoda B."/>
            <person name="Gazquez C."/>
            <person name="Elosegui-Artola A."/>
            <person name="Kim D.S."/>
            <person name="De Juan-Pardo E."/>
            <person name="Demeyer K."/>
            <person name="Hole K."/>
            <person name="Larrea E."/>
            <person name="Timmerman E."/>
            <person name="Prieto J."/>
            <person name="Arnesen T."/>
            <person name="Sherman F."/>
            <person name="Gevaert K."/>
            <person name="Aldabe R."/>
        </authorList>
    </citation>
    <scope>ACETYLATION [LARGE SCALE ANALYSIS] AT SER-2</scope>
    <scope>CLEAVAGE OF INITIATOR METHIONINE [LARGE SCALE ANALYSIS]</scope>
    <scope>IDENTIFICATION BY MASS SPECTROMETRY [LARGE SCALE ANALYSIS]</scope>
</reference>
<keyword id="KW-0007">Acetylation</keyword>
<keyword id="KW-0328">Glycosyltransferase</keyword>
<keyword id="KW-0597">Phosphoprotein</keyword>
<keyword id="KW-1185">Reference proteome</keyword>
<keyword id="KW-0808">Transferase</keyword>
<sequence length="311" mass="33755">MSDILNVSQQREAITKAAAYISAILEPHFKNTTNFEPPRTLIICGSGLGGISTKLSRDNPPPVTVPYQDIPGFKKSTVPGHSGTLMFGSMNGSPVVLMNGRLHGYEGNTLFETTFPIRVLNHMGHVRNLIVTNAAGGINAKYQACDLMCIYDHLNIPGLAGQHPLRGPNLDEDGPRFLALSDAYDLELRKLLFKKWKELKIQRPLHEGTYTFVSGPTFETRAESKMIRMLGGDAVGMSTVPEVIVARHCGWRVLALSLITNTCVVDSPASALDESPVPLEKGKATHAEVLENGKIASNDVQNLIAAVMGEL</sequence>
<organism>
    <name type="scientific">Saccharomyces cerevisiae (strain ATCC 204508 / S288c)</name>
    <name type="common">Baker's yeast</name>
    <dbReference type="NCBI Taxonomy" id="559292"/>
    <lineage>
        <taxon>Eukaryota</taxon>
        <taxon>Fungi</taxon>
        <taxon>Dikarya</taxon>
        <taxon>Ascomycota</taxon>
        <taxon>Saccharomycotina</taxon>
        <taxon>Saccharomycetes</taxon>
        <taxon>Saccharomycetales</taxon>
        <taxon>Saccharomycetaceae</taxon>
        <taxon>Saccharomyces</taxon>
    </lineage>
</organism>
<dbReference type="EC" id="2.4.2.1"/>
<dbReference type="EMBL" id="U14913">
    <property type="protein sequence ID" value="AAB67440.1"/>
    <property type="molecule type" value="Genomic_DNA"/>
</dbReference>
<dbReference type="EMBL" id="AY557950">
    <property type="protein sequence ID" value="AAS56276.1"/>
    <property type="molecule type" value="Genomic_DNA"/>
</dbReference>
<dbReference type="EMBL" id="BK006945">
    <property type="protein sequence ID" value="DAA09526.1"/>
    <property type="molecule type" value="Genomic_DNA"/>
</dbReference>
<dbReference type="PIR" id="S48560">
    <property type="entry name" value="S48560"/>
</dbReference>
<dbReference type="RefSeq" id="NP_013310.1">
    <property type="nucleotide sequence ID" value="NM_001182096.1"/>
</dbReference>
<dbReference type="SMR" id="Q05788"/>
<dbReference type="BioGRID" id="31477">
    <property type="interactions" value="126"/>
</dbReference>
<dbReference type="DIP" id="DIP-4300N"/>
<dbReference type="FunCoup" id="Q05788">
    <property type="interactions" value="902"/>
</dbReference>
<dbReference type="IntAct" id="Q05788">
    <property type="interactions" value="2"/>
</dbReference>
<dbReference type="STRING" id="4932.YLR209C"/>
<dbReference type="iPTMnet" id="Q05788"/>
<dbReference type="PaxDb" id="4932-YLR209C"/>
<dbReference type="PeptideAtlas" id="Q05788"/>
<dbReference type="EnsemblFungi" id="YLR209C_mRNA">
    <property type="protein sequence ID" value="YLR209C"/>
    <property type="gene ID" value="YLR209C"/>
</dbReference>
<dbReference type="GeneID" id="850906"/>
<dbReference type="KEGG" id="sce:YLR209C"/>
<dbReference type="AGR" id="SGD:S000004199"/>
<dbReference type="SGD" id="S000004199">
    <property type="gene designation" value="PNP1"/>
</dbReference>
<dbReference type="VEuPathDB" id="FungiDB:YLR209C"/>
<dbReference type="eggNOG" id="KOG3984">
    <property type="taxonomic scope" value="Eukaryota"/>
</dbReference>
<dbReference type="GeneTree" id="ENSGT00950000182991"/>
<dbReference type="HOGENOM" id="CLU_054456_1_2_1"/>
<dbReference type="InParanoid" id="Q05788"/>
<dbReference type="OMA" id="EGVYAQF"/>
<dbReference type="OrthoDB" id="10261782at2759"/>
<dbReference type="BioCyc" id="YEAST:YLR209C-MONOMER"/>
<dbReference type="BRENDA" id="2.4.2.1">
    <property type="organism ID" value="984"/>
</dbReference>
<dbReference type="Reactome" id="R-SCE-6798695">
    <property type="pathway name" value="Neutrophil degranulation"/>
</dbReference>
<dbReference type="Reactome" id="R-SCE-74217">
    <property type="pathway name" value="Purine salvage"/>
</dbReference>
<dbReference type="Reactome" id="R-SCE-74259">
    <property type="pathway name" value="Purine catabolism"/>
</dbReference>
<dbReference type="Reactome" id="R-SCE-9755088">
    <property type="pathway name" value="Ribavirin ADME"/>
</dbReference>
<dbReference type="UniPathway" id="UPA00606"/>
<dbReference type="BioGRID-ORCS" id="850906">
    <property type="hits" value="0 hits in 10 CRISPR screens"/>
</dbReference>
<dbReference type="ChiTaRS" id="PNP1">
    <property type="organism name" value="yeast"/>
</dbReference>
<dbReference type="PRO" id="PR:Q05788"/>
<dbReference type="Proteomes" id="UP000002311">
    <property type="component" value="Chromosome XII"/>
</dbReference>
<dbReference type="RNAct" id="Q05788">
    <property type="molecule type" value="protein"/>
</dbReference>
<dbReference type="GO" id="GO:0005737">
    <property type="term" value="C:cytoplasm"/>
    <property type="evidence" value="ECO:0000318"/>
    <property type="project" value="GO_Central"/>
</dbReference>
<dbReference type="GO" id="GO:0047724">
    <property type="term" value="F:inosine nucleosidase activity"/>
    <property type="evidence" value="ECO:0000314"/>
    <property type="project" value="SGD"/>
</dbReference>
<dbReference type="GO" id="GO:0070635">
    <property type="term" value="F:nicotinamide riboside hydrolase activity"/>
    <property type="evidence" value="ECO:0000314"/>
    <property type="project" value="SGD"/>
</dbReference>
<dbReference type="GO" id="GO:0004731">
    <property type="term" value="F:purine-nucleoside phosphorylase activity"/>
    <property type="evidence" value="ECO:0000314"/>
    <property type="project" value="SGD"/>
</dbReference>
<dbReference type="GO" id="GO:0046115">
    <property type="term" value="P:guanosine catabolic process"/>
    <property type="evidence" value="ECO:0000315"/>
    <property type="project" value="SGD"/>
</dbReference>
<dbReference type="GO" id="GO:0006148">
    <property type="term" value="P:inosine catabolic process"/>
    <property type="evidence" value="ECO:0000315"/>
    <property type="project" value="SGD"/>
</dbReference>
<dbReference type="GO" id="GO:0019358">
    <property type="term" value="P:nicotinate nucleotide salvage"/>
    <property type="evidence" value="ECO:0000316"/>
    <property type="project" value="SGD"/>
</dbReference>
<dbReference type="CDD" id="cd09009">
    <property type="entry name" value="PNP-EcPNPII_like"/>
    <property type="match status" value="1"/>
</dbReference>
<dbReference type="FunFam" id="3.40.50.1580:FF:000004">
    <property type="entry name" value="Purine nucleoside phosphorylase"/>
    <property type="match status" value="1"/>
</dbReference>
<dbReference type="Gene3D" id="3.40.50.1580">
    <property type="entry name" value="Nucleoside phosphorylase domain"/>
    <property type="match status" value="1"/>
</dbReference>
<dbReference type="InterPro" id="IPR000845">
    <property type="entry name" value="Nucleoside_phosphorylase_d"/>
</dbReference>
<dbReference type="InterPro" id="IPR035994">
    <property type="entry name" value="Nucleoside_phosphorylase_sf"/>
</dbReference>
<dbReference type="InterPro" id="IPR011268">
    <property type="entry name" value="Purine_phosphorylase"/>
</dbReference>
<dbReference type="InterPro" id="IPR018099">
    <property type="entry name" value="Purine_phosphorylase-2_CS"/>
</dbReference>
<dbReference type="NCBIfam" id="TIGR01697">
    <property type="entry name" value="PNPH-PUNA-XAPA"/>
    <property type="match status" value="1"/>
</dbReference>
<dbReference type="NCBIfam" id="NF006054">
    <property type="entry name" value="PRK08202.1"/>
    <property type="match status" value="1"/>
</dbReference>
<dbReference type="PANTHER" id="PTHR11904">
    <property type="entry name" value="METHYLTHIOADENOSINE/PURINE NUCLEOSIDE PHOSPHORYLASE"/>
    <property type="match status" value="1"/>
</dbReference>
<dbReference type="PANTHER" id="PTHR11904:SF9">
    <property type="entry name" value="PURINE NUCLEOSIDE PHOSPHORYLASE-RELATED"/>
    <property type="match status" value="1"/>
</dbReference>
<dbReference type="Pfam" id="PF01048">
    <property type="entry name" value="PNP_UDP_1"/>
    <property type="match status" value="1"/>
</dbReference>
<dbReference type="PIRSF" id="PIRSF000477">
    <property type="entry name" value="PurNPase"/>
    <property type="match status" value="1"/>
</dbReference>
<dbReference type="SUPFAM" id="SSF53167">
    <property type="entry name" value="Purine and uridine phosphorylases"/>
    <property type="match status" value="1"/>
</dbReference>
<dbReference type="PROSITE" id="PS01240">
    <property type="entry name" value="PNP_MTAP_2"/>
    <property type="match status" value="1"/>
</dbReference>
<gene>
    <name type="primary">PNP1</name>
    <name type="ordered locus">YLR209C</name>
    <name type="ORF">L8167.19</name>
</gene>
<feature type="initiator methionine" description="Removed" evidence="6">
    <location>
        <position position="1"/>
    </location>
</feature>
<feature type="chain" id="PRO_0000184538" description="Purine nucleoside phosphorylase">
    <location>
        <begin position="2"/>
        <end position="311"/>
    </location>
</feature>
<feature type="binding site" evidence="2">
    <location>
        <position position="46"/>
    </location>
    <ligand>
        <name>phosphate</name>
        <dbReference type="ChEBI" id="CHEBI:43474"/>
    </ligand>
</feature>
<feature type="binding site" evidence="2">
    <location>
        <position position="81"/>
    </location>
    <ligand>
        <name>phosphate</name>
        <dbReference type="ChEBI" id="CHEBI:43474"/>
    </ligand>
</feature>
<feature type="binding site" evidence="2">
    <location>
        <begin position="101"/>
        <end position="103"/>
    </location>
    <ligand>
        <name>phosphate</name>
        <dbReference type="ChEBI" id="CHEBI:43474"/>
    </ligand>
</feature>
<feature type="binding site" evidence="2">
    <location>
        <position position="134"/>
    </location>
    <ligand>
        <name>phosphate</name>
        <dbReference type="ChEBI" id="CHEBI:43474"/>
    </ligand>
</feature>
<feature type="binding site" evidence="2">
    <location>
        <position position="219"/>
    </location>
    <ligand>
        <name>a purine D-ribonucleoside</name>
        <dbReference type="ChEBI" id="CHEBI:142355"/>
    </ligand>
</feature>
<feature type="binding site" evidence="2">
    <location>
        <position position="238"/>
    </location>
    <ligand>
        <name>phosphate</name>
        <dbReference type="ChEBI" id="CHEBI:43474"/>
    </ligand>
</feature>
<feature type="binding site" evidence="2">
    <location>
        <position position="261"/>
    </location>
    <ligand>
        <name>a purine D-ribonucleoside</name>
        <dbReference type="ChEBI" id="CHEBI:142355"/>
    </ligand>
</feature>
<feature type="modified residue" description="N-acetylserine" evidence="6">
    <location>
        <position position="2"/>
    </location>
</feature>
<feature type="modified residue" description="Phosphoserine" evidence="5">
    <location>
        <position position="275"/>
    </location>
</feature>
<accession>Q05788</accession>
<accession>D6VYL0</accession>
<name>PNPH_YEAST</name>
<comment type="function">
    <text evidence="1">The purine nucleoside phosphorylases catalyze the phosphorolytic breakdown of the N-glycosidic bond in the beta-(deoxy)ribonucleoside molecules, with the formation of the corresponding free purine bases and pentose-1-phosphate. Cleaves guanosine and inosine (By similarity).</text>
</comment>
<comment type="catalytic activity">
    <reaction>
        <text>a purine D-ribonucleoside + phosphate = a purine nucleobase + alpha-D-ribose 1-phosphate</text>
        <dbReference type="Rhea" id="RHEA:19805"/>
        <dbReference type="ChEBI" id="CHEBI:26386"/>
        <dbReference type="ChEBI" id="CHEBI:43474"/>
        <dbReference type="ChEBI" id="CHEBI:57720"/>
        <dbReference type="ChEBI" id="CHEBI:142355"/>
        <dbReference type="EC" id="2.4.2.1"/>
    </reaction>
</comment>
<comment type="pathway">
    <text>Purine metabolism; purine nucleoside salvage.</text>
</comment>
<comment type="miscellaneous">
    <text evidence="3">Present with 1630 molecules/cell in log phase SD medium.</text>
</comment>
<comment type="similarity">
    <text evidence="4">Belongs to the PNP/MTAP phosphorylase family.</text>
</comment>
<proteinExistence type="evidence at protein level"/>